<organism>
    <name type="scientific">Geobacter sulfurreducens (strain ATCC 51573 / DSM 12127 / PCA)</name>
    <dbReference type="NCBI Taxonomy" id="243231"/>
    <lineage>
        <taxon>Bacteria</taxon>
        <taxon>Pseudomonadati</taxon>
        <taxon>Thermodesulfobacteriota</taxon>
        <taxon>Desulfuromonadia</taxon>
        <taxon>Geobacterales</taxon>
        <taxon>Geobacteraceae</taxon>
        <taxon>Geobacter</taxon>
    </lineage>
</organism>
<comment type="function">
    <text evidence="1">This protein specifically catalyzes the removal of signal peptides from prolipoproteins.</text>
</comment>
<comment type="catalytic activity">
    <reaction evidence="1">
        <text>Release of signal peptides from bacterial membrane prolipoproteins. Hydrolyzes -Xaa-Yaa-Zaa-|-(S,diacylglyceryl)Cys-, in which Xaa is hydrophobic (preferably Leu), and Yaa (Ala or Ser) and Zaa (Gly or Ala) have small, neutral side chains.</text>
        <dbReference type="EC" id="3.4.23.36"/>
    </reaction>
</comment>
<comment type="pathway">
    <text evidence="1">Protein modification; lipoprotein biosynthesis (signal peptide cleavage).</text>
</comment>
<comment type="subcellular location">
    <subcellularLocation>
        <location evidence="1">Cell inner membrane</location>
        <topology evidence="1">Multi-pass membrane protein</topology>
    </subcellularLocation>
</comment>
<comment type="similarity">
    <text evidence="1">Belongs to the peptidase A8 family.</text>
</comment>
<keyword id="KW-0064">Aspartyl protease</keyword>
<keyword id="KW-0997">Cell inner membrane</keyword>
<keyword id="KW-1003">Cell membrane</keyword>
<keyword id="KW-0378">Hydrolase</keyword>
<keyword id="KW-0472">Membrane</keyword>
<keyword id="KW-0645">Protease</keyword>
<keyword id="KW-1185">Reference proteome</keyword>
<keyword id="KW-0812">Transmembrane</keyword>
<keyword id="KW-1133">Transmembrane helix</keyword>
<accession>Q747Y0</accession>
<proteinExistence type="inferred from homology"/>
<dbReference type="EC" id="3.4.23.36" evidence="1"/>
<dbReference type="EMBL" id="AE017180">
    <property type="protein sequence ID" value="AAR36526.1"/>
    <property type="molecule type" value="Genomic_DNA"/>
</dbReference>
<dbReference type="RefSeq" id="NP_954176.1">
    <property type="nucleotide sequence ID" value="NC_002939.5"/>
</dbReference>
<dbReference type="RefSeq" id="WP_010943757.1">
    <property type="nucleotide sequence ID" value="NC_002939.5"/>
</dbReference>
<dbReference type="SMR" id="Q747Y0"/>
<dbReference type="FunCoup" id="Q747Y0">
    <property type="interactions" value="384"/>
</dbReference>
<dbReference type="STRING" id="243231.GSU3135"/>
<dbReference type="EnsemblBacteria" id="AAR36526">
    <property type="protein sequence ID" value="AAR36526"/>
    <property type="gene ID" value="GSU3135"/>
</dbReference>
<dbReference type="KEGG" id="gsu:GSU3135"/>
<dbReference type="PATRIC" id="fig|243231.5.peg.3160"/>
<dbReference type="eggNOG" id="COG0597">
    <property type="taxonomic scope" value="Bacteria"/>
</dbReference>
<dbReference type="HOGENOM" id="CLU_083252_4_0_7"/>
<dbReference type="InParanoid" id="Q747Y0"/>
<dbReference type="OrthoDB" id="9810259at2"/>
<dbReference type="UniPathway" id="UPA00665"/>
<dbReference type="Proteomes" id="UP000000577">
    <property type="component" value="Chromosome"/>
</dbReference>
<dbReference type="GO" id="GO:0005886">
    <property type="term" value="C:plasma membrane"/>
    <property type="evidence" value="ECO:0000318"/>
    <property type="project" value="GO_Central"/>
</dbReference>
<dbReference type="GO" id="GO:0004190">
    <property type="term" value="F:aspartic-type endopeptidase activity"/>
    <property type="evidence" value="ECO:0007669"/>
    <property type="project" value="UniProtKB-UniRule"/>
</dbReference>
<dbReference type="GO" id="GO:0004175">
    <property type="term" value="F:endopeptidase activity"/>
    <property type="evidence" value="ECO:0000318"/>
    <property type="project" value="GO_Central"/>
</dbReference>
<dbReference type="GO" id="GO:0006508">
    <property type="term" value="P:proteolysis"/>
    <property type="evidence" value="ECO:0007669"/>
    <property type="project" value="UniProtKB-KW"/>
</dbReference>
<dbReference type="HAMAP" id="MF_00161">
    <property type="entry name" value="LspA"/>
    <property type="match status" value="1"/>
</dbReference>
<dbReference type="InterPro" id="IPR001872">
    <property type="entry name" value="Peptidase_A8"/>
</dbReference>
<dbReference type="NCBIfam" id="TIGR00077">
    <property type="entry name" value="lspA"/>
    <property type="match status" value="1"/>
</dbReference>
<dbReference type="PANTHER" id="PTHR33695">
    <property type="entry name" value="LIPOPROTEIN SIGNAL PEPTIDASE"/>
    <property type="match status" value="1"/>
</dbReference>
<dbReference type="PANTHER" id="PTHR33695:SF1">
    <property type="entry name" value="LIPOPROTEIN SIGNAL PEPTIDASE"/>
    <property type="match status" value="1"/>
</dbReference>
<dbReference type="Pfam" id="PF01252">
    <property type="entry name" value="Peptidase_A8"/>
    <property type="match status" value="1"/>
</dbReference>
<dbReference type="PRINTS" id="PR00781">
    <property type="entry name" value="LIPOSIGPTASE"/>
</dbReference>
<dbReference type="PROSITE" id="PS00855">
    <property type="entry name" value="SPASE_II"/>
    <property type="match status" value="1"/>
</dbReference>
<sequence>MKPTYRIFNAVVLGSLVLDQATKVLIDRTMDLYQSIPVIDGLFSITYLRNRGAAFSFLADFSYRLPFFILVSVVALGVIAVTFRKLRDDQHLAAAALALIFSGALGNLIDRVRLGEVIDFLDVYWKTYHWPAFNVADSAICVGVALLAVDMIREERRKAP</sequence>
<feature type="chain" id="PRO_0000289387" description="Lipoprotein signal peptidase">
    <location>
        <begin position="1"/>
        <end position="160"/>
    </location>
</feature>
<feature type="transmembrane region" description="Helical" evidence="1">
    <location>
        <begin position="63"/>
        <end position="83"/>
    </location>
</feature>
<feature type="transmembrane region" description="Helical" evidence="1">
    <location>
        <begin position="89"/>
        <end position="109"/>
    </location>
</feature>
<feature type="transmembrane region" description="Helical" evidence="1">
    <location>
        <begin position="132"/>
        <end position="152"/>
    </location>
</feature>
<feature type="active site" evidence="1">
    <location>
        <position position="119"/>
    </location>
</feature>
<feature type="active site" evidence="1">
    <location>
        <position position="137"/>
    </location>
</feature>
<evidence type="ECO:0000255" key="1">
    <source>
        <dbReference type="HAMAP-Rule" id="MF_00161"/>
    </source>
</evidence>
<reference key="1">
    <citation type="journal article" date="2003" name="Science">
        <title>Genome of Geobacter sulfurreducens: metal reduction in subsurface environments.</title>
        <authorList>
            <person name="Methe B.A."/>
            <person name="Nelson K.E."/>
            <person name="Eisen J.A."/>
            <person name="Paulsen I.T."/>
            <person name="Nelson W.C."/>
            <person name="Heidelberg J.F."/>
            <person name="Wu D."/>
            <person name="Wu M."/>
            <person name="Ward N.L."/>
            <person name="Beanan M.J."/>
            <person name="Dodson R.J."/>
            <person name="Madupu R."/>
            <person name="Brinkac L.M."/>
            <person name="Daugherty S.C."/>
            <person name="DeBoy R.T."/>
            <person name="Durkin A.S."/>
            <person name="Gwinn M.L."/>
            <person name="Kolonay J.F."/>
            <person name="Sullivan S.A."/>
            <person name="Haft D.H."/>
            <person name="Selengut J."/>
            <person name="Davidsen T.M."/>
            <person name="Zafar N."/>
            <person name="White O."/>
            <person name="Tran B."/>
            <person name="Romero C."/>
            <person name="Forberger H.A."/>
            <person name="Weidman J.F."/>
            <person name="Khouri H.M."/>
            <person name="Feldblyum T.V."/>
            <person name="Utterback T.R."/>
            <person name="Van Aken S.E."/>
            <person name="Lovley D.R."/>
            <person name="Fraser C.M."/>
        </authorList>
    </citation>
    <scope>NUCLEOTIDE SEQUENCE [LARGE SCALE GENOMIC DNA]</scope>
    <source>
        <strain>ATCC 51573 / DSM 12127 / PCA</strain>
    </source>
</reference>
<protein>
    <recommendedName>
        <fullName evidence="1">Lipoprotein signal peptidase</fullName>
        <ecNumber evidence="1">3.4.23.36</ecNumber>
    </recommendedName>
    <alternativeName>
        <fullName evidence="1">Prolipoprotein signal peptidase</fullName>
    </alternativeName>
    <alternativeName>
        <fullName evidence="1">Signal peptidase II</fullName>
        <shortName evidence="1">SPase II</shortName>
    </alternativeName>
</protein>
<name>LSPA_GEOSL</name>
<gene>
    <name evidence="1" type="primary">lspA</name>
    <name type="ordered locus">GSU3135</name>
</gene>